<reference key="1">
    <citation type="journal article" date="2008" name="J. Bacteriol.">
        <title>Insights into the environmental resistance gene pool from the genome sequence of the multidrug-resistant environmental isolate Escherichia coli SMS-3-5.</title>
        <authorList>
            <person name="Fricke W.F."/>
            <person name="Wright M.S."/>
            <person name="Lindell A.H."/>
            <person name="Harkins D.M."/>
            <person name="Baker-Austin C."/>
            <person name="Ravel J."/>
            <person name="Stepanauskas R."/>
        </authorList>
    </citation>
    <scope>NUCLEOTIDE SEQUENCE [LARGE SCALE GENOMIC DNA]</scope>
    <source>
        <strain>SMS-3-5 / SECEC</strain>
    </source>
</reference>
<gene>
    <name evidence="1" type="primary">aaeB</name>
    <name type="ordered locus">EcSMS35_3536</name>
</gene>
<feature type="chain" id="PRO_1000146738" description="p-hydroxybenzoic acid efflux pump subunit AaeB">
    <location>
        <begin position="1"/>
        <end position="655"/>
    </location>
</feature>
<feature type="transmembrane region" description="Helical" evidence="1">
    <location>
        <begin position="13"/>
        <end position="33"/>
    </location>
</feature>
<feature type="transmembrane region" description="Helical" evidence="1">
    <location>
        <begin position="38"/>
        <end position="58"/>
    </location>
</feature>
<feature type="transmembrane region" description="Helical" evidence="1">
    <location>
        <begin position="69"/>
        <end position="89"/>
    </location>
</feature>
<feature type="transmembrane region" description="Helical" evidence="1">
    <location>
        <begin position="93"/>
        <end position="113"/>
    </location>
</feature>
<feature type="transmembrane region" description="Helical" evidence="1">
    <location>
        <begin position="121"/>
        <end position="141"/>
    </location>
</feature>
<feature type="transmembrane region" description="Helical" evidence="1">
    <location>
        <begin position="152"/>
        <end position="172"/>
    </location>
</feature>
<feature type="transmembrane region" description="Helical" evidence="1">
    <location>
        <begin position="370"/>
        <end position="390"/>
    </location>
</feature>
<feature type="transmembrane region" description="Helical" evidence="1">
    <location>
        <begin position="407"/>
        <end position="427"/>
    </location>
</feature>
<feature type="transmembrane region" description="Helical" evidence="1">
    <location>
        <begin position="431"/>
        <end position="451"/>
    </location>
</feature>
<feature type="transmembrane region" description="Helical" evidence="1">
    <location>
        <begin position="459"/>
        <end position="479"/>
    </location>
</feature>
<feature type="transmembrane region" description="Helical" evidence="1">
    <location>
        <begin position="482"/>
        <end position="502"/>
    </location>
</feature>
<accession>B1LGK6</accession>
<dbReference type="EMBL" id="CP000970">
    <property type="protein sequence ID" value="ACB18232.1"/>
    <property type="molecule type" value="Genomic_DNA"/>
</dbReference>
<dbReference type="RefSeq" id="WP_000510964.1">
    <property type="nucleotide sequence ID" value="NC_010498.1"/>
</dbReference>
<dbReference type="SMR" id="B1LGK6"/>
<dbReference type="KEGG" id="ecm:EcSMS35_3536"/>
<dbReference type="HOGENOM" id="CLU_027647_0_0_6"/>
<dbReference type="Proteomes" id="UP000007011">
    <property type="component" value="Chromosome"/>
</dbReference>
<dbReference type="GO" id="GO:0005886">
    <property type="term" value="C:plasma membrane"/>
    <property type="evidence" value="ECO:0007669"/>
    <property type="project" value="UniProtKB-SubCell"/>
</dbReference>
<dbReference type="GO" id="GO:0022857">
    <property type="term" value="F:transmembrane transporter activity"/>
    <property type="evidence" value="ECO:0007669"/>
    <property type="project" value="UniProtKB-UniRule"/>
</dbReference>
<dbReference type="GO" id="GO:0046942">
    <property type="term" value="P:carboxylic acid transport"/>
    <property type="evidence" value="ECO:0007669"/>
    <property type="project" value="InterPro"/>
</dbReference>
<dbReference type="HAMAP" id="MF_01545">
    <property type="entry name" value="AaeB"/>
    <property type="match status" value="1"/>
</dbReference>
<dbReference type="InterPro" id="IPR006726">
    <property type="entry name" value="PHBA_efflux_AaeB/fusaric-R"/>
</dbReference>
<dbReference type="InterPro" id="IPR023706">
    <property type="entry name" value="PHBA_efflux_pump_AaeB"/>
</dbReference>
<dbReference type="NCBIfam" id="NF007916">
    <property type="entry name" value="PRK10631.1"/>
    <property type="match status" value="1"/>
</dbReference>
<dbReference type="PANTHER" id="PTHR30509:SF9">
    <property type="entry name" value="MULTIDRUG RESISTANCE PROTEIN MDTO"/>
    <property type="match status" value="1"/>
</dbReference>
<dbReference type="PANTHER" id="PTHR30509">
    <property type="entry name" value="P-HYDROXYBENZOIC ACID EFFLUX PUMP SUBUNIT-RELATED"/>
    <property type="match status" value="1"/>
</dbReference>
<dbReference type="Pfam" id="PF04632">
    <property type="entry name" value="FUSC"/>
    <property type="match status" value="1"/>
</dbReference>
<evidence type="ECO:0000255" key="1">
    <source>
        <dbReference type="HAMAP-Rule" id="MF_01545"/>
    </source>
</evidence>
<protein>
    <recommendedName>
        <fullName evidence="1">p-hydroxybenzoic acid efflux pump subunit AaeB</fullName>
        <shortName evidence="1">pHBA efflux pump protein B</shortName>
    </recommendedName>
</protein>
<comment type="function">
    <text evidence="1">Forms an efflux pump with AaeA. Could function as a metabolic relief valve, allowing to eliminate certain compounds when they accumulate to high levels in the cell.</text>
</comment>
<comment type="subcellular location">
    <subcellularLocation>
        <location evidence="1">Cell inner membrane</location>
        <topology evidence="1">Multi-pass membrane protein</topology>
    </subcellularLocation>
</comment>
<comment type="induction">
    <text evidence="1">Positively coregulated with aaeA and aaeX by AaeR.</text>
</comment>
<comment type="similarity">
    <text evidence="1">Belongs to the aromatic acid exporter ArAE (TC 2.A.85) family.</text>
</comment>
<proteinExistence type="inferred from homology"/>
<name>AAEB_ECOSM</name>
<keyword id="KW-0997">Cell inner membrane</keyword>
<keyword id="KW-1003">Cell membrane</keyword>
<keyword id="KW-0472">Membrane</keyword>
<keyword id="KW-0812">Transmembrane</keyword>
<keyword id="KW-1133">Transmembrane helix</keyword>
<keyword id="KW-0813">Transport</keyword>
<sequence>MGIFSIANQHIRFAVKLATAIVLALFVGFHFQLETPRWAVLTAAIVAAGPAFAAGGEPYSGAIRYRGFLRIIGTFIGCIAGLVIIIAMIRAPLLMILVCCIWAGFCTWISSLVRIENSYAWGLAGYTALIIVITIQPEPLLTPQFAVERCSEIVIGIVCAIMADLLFSPRSIKQEVDRELESLLVAQYQLMQLCIKHGDGEVVDKAWGDLVRRTTALQGMRSNLNMESSRWARANRRLKAINTLSLTLITQSCETYLIQNTRPELITDTFREFFDTPVETAQDVHKQLKRLRRVIAWTGERETPVTIYSWVAAATRYQLLKRGVISNTKINATEEEILQGEPEVKVESAERHHAMVNFWRTTLSCILGTLFWLWTGWTSGSGAMVMIAVVTSLAMRLPNPRMVAIDFIYGTLAALPLGLLYFLVIIPNTQQSMLLLCISLAVLGFFLGIEVQKRRLGSMGALASTINIIVLDNPMTFHFSQFLDSALGQIVGCVLAFTVILLVRDKSRDRTGRVLLNQFVSAAVSAMTTNVARRKENHLPALYQQLFLLMNKFPGDLPKFRLALTMIIAHQRLRDAPIPVNEDLSAFHRQMRRTADHVISARSDDKRRRYFGQLLEELEIYQEKLRIWQAPPQVTEPVHRLTGMLHKYQHALTDS</sequence>
<organism>
    <name type="scientific">Escherichia coli (strain SMS-3-5 / SECEC)</name>
    <dbReference type="NCBI Taxonomy" id="439855"/>
    <lineage>
        <taxon>Bacteria</taxon>
        <taxon>Pseudomonadati</taxon>
        <taxon>Pseudomonadota</taxon>
        <taxon>Gammaproteobacteria</taxon>
        <taxon>Enterobacterales</taxon>
        <taxon>Enterobacteriaceae</taxon>
        <taxon>Escherichia</taxon>
    </lineage>
</organism>